<name>OZF_BOVIN</name>
<keyword id="KW-0238">DNA-binding</keyword>
<keyword id="KW-1017">Isopeptide bond</keyword>
<keyword id="KW-0479">Metal-binding</keyword>
<keyword id="KW-0539">Nucleus</keyword>
<keyword id="KW-1185">Reference proteome</keyword>
<keyword id="KW-0677">Repeat</keyword>
<keyword id="KW-0832">Ubl conjugation</keyword>
<keyword id="KW-0862">Zinc</keyword>
<keyword id="KW-0863">Zinc-finger</keyword>
<gene>
    <name type="primary">ZNF146</name>
    <name type="synonym">OZF</name>
</gene>
<evidence type="ECO:0000250" key="1"/>
<evidence type="ECO:0000250" key="2">
    <source>
        <dbReference type="UniProtKB" id="Q15072"/>
    </source>
</evidence>
<evidence type="ECO:0000255" key="3">
    <source>
        <dbReference type="PROSITE-ProRule" id="PRU00042"/>
    </source>
</evidence>
<evidence type="ECO:0000305" key="4"/>
<dbReference type="EMBL" id="X81804">
    <property type="protein sequence ID" value="CAA57406.1"/>
    <property type="status" value="ALT_INIT"/>
    <property type="molecule type" value="Genomic_DNA"/>
</dbReference>
<dbReference type="SMR" id="Q28151"/>
<dbReference type="STRING" id="9913.ENSBTAP00000031695"/>
<dbReference type="PaxDb" id="9913-ENSBTAP00000042366"/>
<dbReference type="eggNOG" id="KOG1721">
    <property type="taxonomic scope" value="Eukaryota"/>
</dbReference>
<dbReference type="InParanoid" id="Q28151"/>
<dbReference type="Proteomes" id="UP000009136">
    <property type="component" value="Unplaced"/>
</dbReference>
<dbReference type="GO" id="GO:0005634">
    <property type="term" value="C:nucleus"/>
    <property type="evidence" value="ECO:0000318"/>
    <property type="project" value="GO_Central"/>
</dbReference>
<dbReference type="GO" id="GO:0000981">
    <property type="term" value="F:DNA-binding transcription factor activity, RNA polymerase II-specific"/>
    <property type="evidence" value="ECO:0000318"/>
    <property type="project" value="GO_Central"/>
</dbReference>
<dbReference type="GO" id="GO:0000977">
    <property type="term" value="F:RNA polymerase II transcription regulatory region sequence-specific DNA binding"/>
    <property type="evidence" value="ECO:0000318"/>
    <property type="project" value="GO_Central"/>
</dbReference>
<dbReference type="GO" id="GO:0008270">
    <property type="term" value="F:zinc ion binding"/>
    <property type="evidence" value="ECO:0007669"/>
    <property type="project" value="UniProtKB-KW"/>
</dbReference>
<dbReference type="GO" id="GO:0006357">
    <property type="term" value="P:regulation of transcription by RNA polymerase II"/>
    <property type="evidence" value="ECO:0000318"/>
    <property type="project" value="GO_Central"/>
</dbReference>
<dbReference type="FunFam" id="3.30.160.60:FF:000794">
    <property type="entry name" value="zinc finger protein 2 isoform X2"/>
    <property type="match status" value="1"/>
</dbReference>
<dbReference type="FunFam" id="3.30.160.60:FF:000919">
    <property type="entry name" value="Zinc finger protein 260"/>
    <property type="match status" value="2"/>
</dbReference>
<dbReference type="FunFam" id="3.30.160.60:FF:001408">
    <property type="entry name" value="Zinc finger protein 260"/>
    <property type="match status" value="1"/>
</dbReference>
<dbReference type="FunFam" id="3.30.160.60:FF:000016">
    <property type="entry name" value="zinc finger protein 37 homolog"/>
    <property type="match status" value="1"/>
</dbReference>
<dbReference type="FunFam" id="3.30.160.60:FF:001498">
    <property type="entry name" value="Zinc finger protein 404"/>
    <property type="match status" value="1"/>
</dbReference>
<dbReference type="FunFam" id="3.30.160.60:FF:002254">
    <property type="entry name" value="Zinc finger protein 540"/>
    <property type="match status" value="1"/>
</dbReference>
<dbReference type="FunFam" id="3.30.160.60:FF:000575">
    <property type="entry name" value="Zinc finger protein OZF"/>
    <property type="match status" value="1"/>
</dbReference>
<dbReference type="FunFam" id="3.30.160.60:FF:001060">
    <property type="entry name" value="Zinc finger protein OZF"/>
    <property type="match status" value="1"/>
</dbReference>
<dbReference type="FunFam" id="3.30.160.60:FF:001541">
    <property type="entry name" value="zinc finger protein OZF"/>
    <property type="match status" value="1"/>
</dbReference>
<dbReference type="Gene3D" id="3.30.160.60">
    <property type="entry name" value="Classic Zinc Finger"/>
    <property type="match status" value="10"/>
</dbReference>
<dbReference type="InterPro" id="IPR036236">
    <property type="entry name" value="Znf_C2H2_sf"/>
</dbReference>
<dbReference type="InterPro" id="IPR013087">
    <property type="entry name" value="Znf_C2H2_type"/>
</dbReference>
<dbReference type="PANTHER" id="PTHR23226">
    <property type="entry name" value="ZINC FINGER AND SCAN DOMAIN-CONTAINING"/>
    <property type="match status" value="1"/>
</dbReference>
<dbReference type="PANTHER" id="PTHR23226:SF366">
    <property type="entry name" value="ZINC FINGER PROTEIN ZFP2"/>
    <property type="match status" value="1"/>
</dbReference>
<dbReference type="Pfam" id="PF00096">
    <property type="entry name" value="zf-C2H2"/>
    <property type="match status" value="10"/>
</dbReference>
<dbReference type="SMART" id="SM00355">
    <property type="entry name" value="ZnF_C2H2"/>
    <property type="match status" value="10"/>
</dbReference>
<dbReference type="SUPFAM" id="SSF57667">
    <property type="entry name" value="beta-beta-alpha zinc fingers"/>
    <property type="match status" value="6"/>
</dbReference>
<dbReference type="PROSITE" id="PS00028">
    <property type="entry name" value="ZINC_FINGER_C2H2_1"/>
    <property type="match status" value="10"/>
</dbReference>
<dbReference type="PROSITE" id="PS50157">
    <property type="entry name" value="ZINC_FINGER_C2H2_2"/>
    <property type="match status" value="10"/>
</dbReference>
<accession>Q28151</accession>
<protein>
    <recommendedName>
        <fullName>Zinc finger protein OZF</fullName>
    </recommendedName>
    <alternativeName>
        <fullName>Only zinc finger protein</fullName>
    </alternativeName>
    <alternativeName>
        <fullName>Zinc finger protein 146</fullName>
    </alternativeName>
</protein>
<feature type="chain" id="PRO_0000047275" description="Zinc finger protein OZF">
    <location>
        <begin position="1"/>
        <end position="292"/>
    </location>
</feature>
<feature type="zinc finger region" description="C2H2-type 1" evidence="3">
    <location>
        <begin position="16"/>
        <end position="38"/>
    </location>
</feature>
<feature type="zinc finger region" description="C2H2-type 2" evidence="3">
    <location>
        <begin position="44"/>
        <end position="66"/>
    </location>
</feature>
<feature type="zinc finger region" description="C2H2-type 3" evidence="3">
    <location>
        <begin position="72"/>
        <end position="94"/>
    </location>
</feature>
<feature type="zinc finger region" description="C2H2-type 4" evidence="3">
    <location>
        <begin position="100"/>
        <end position="122"/>
    </location>
</feature>
<feature type="zinc finger region" description="C2H2-type 5" evidence="3">
    <location>
        <begin position="128"/>
        <end position="150"/>
    </location>
</feature>
<feature type="zinc finger region" description="C2H2-type 6" evidence="3">
    <location>
        <begin position="156"/>
        <end position="178"/>
    </location>
</feature>
<feature type="zinc finger region" description="C2H2-type 7" evidence="3">
    <location>
        <begin position="184"/>
        <end position="206"/>
    </location>
</feature>
<feature type="zinc finger region" description="C2H2-type 8" evidence="3">
    <location>
        <begin position="212"/>
        <end position="234"/>
    </location>
</feature>
<feature type="zinc finger region" description="C2H2-type 9" evidence="3">
    <location>
        <begin position="240"/>
        <end position="262"/>
    </location>
</feature>
<feature type="zinc finger region" description="C2H2-type 10" evidence="3">
    <location>
        <begin position="268"/>
        <end position="290"/>
    </location>
</feature>
<feature type="region of interest" description="Interaction with TERF2IP" evidence="1">
    <location>
        <begin position="212"/>
        <end position="292"/>
    </location>
</feature>
<feature type="cross-link" description="Glycyl lysine isopeptide (Lys-Gly) (interchain with G-Cter in SUMO2)" evidence="2">
    <location>
        <position position="28"/>
    </location>
</feature>
<feature type="cross-link" description="Glycyl lysine isopeptide (Lys-Gly) (interchain with G-Cter in SUMO2)" evidence="2">
    <location>
        <position position="51"/>
    </location>
</feature>
<feature type="cross-link" description="Glycyl lysine isopeptide (Lys-Gly) (interchain with G-Cter in SUMO2)" evidence="2">
    <location>
        <position position="56"/>
    </location>
</feature>
<feature type="cross-link" description="Glycyl lysine isopeptide (Lys-Gly) (interchain with G-Cter in SUMO)" evidence="1">
    <location>
        <position position="157"/>
    </location>
</feature>
<feature type="cross-link" description="Glycyl lysine isopeptide (Lys-Gly) (interchain with G-Cter in SUMO)" evidence="1">
    <location>
        <position position="169"/>
    </location>
</feature>
<feature type="cross-link" description="Glycyl lysine isopeptide (Lys-Gly) (interchain with G-Cter in SUMO2)" evidence="2">
    <location>
        <position position="173"/>
    </location>
</feature>
<sequence>MSHLSQQRICSGENPFACKVCGKIFSHKSTLTEHEHFHNREKPFECNECGKAFSQKQYVIKHQNTHTGEKLLECNECGKSFSQKENLLTHQKIHTGEKPFECKDCGKAFIQKSNLIRHQRTHTGEKPFICKECGKTFSGKSNLTEHEKIHIGEKPFKCNECGTAFGQKKYLIKHQNIHTGEKPYECNECGKAFSQRTSLIVHVRIHSGDKPYECNVCGKAFSQSSSLTVHVRSHTGEKPYGCNECGKAFSQFSTLALHLRIHTGKKPYQCSECGKAFSQKSHHIRHQKIHTH</sequence>
<proteinExistence type="inferred from homology"/>
<organism>
    <name type="scientific">Bos taurus</name>
    <name type="common">Bovine</name>
    <dbReference type="NCBI Taxonomy" id="9913"/>
    <lineage>
        <taxon>Eukaryota</taxon>
        <taxon>Metazoa</taxon>
        <taxon>Chordata</taxon>
        <taxon>Craniata</taxon>
        <taxon>Vertebrata</taxon>
        <taxon>Euteleostomi</taxon>
        <taxon>Mammalia</taxon>
        <taxon>Eutheria</taxon>
        <taxon>Laurasiatheria</taxon>
        <taxon>Artiodactyla</taxon>
        <taxon>Ruminantia</taxon>
        <taxon>Pecora</taxon>
        <taxon>Bovidae</taxon>
        <taxon>Bovinae</taxon>
        <taxon>Bos</taxon>
    </lineage>
</organism>
<comment type="subunit">
    <text evidence="1">Binds DNA. Interacts with SUMO conjugating enzyme UBC9/UBE2I. Interacts with the telomeric protein TERF2IP (By similarity).</text>
</comment>
<comment type="subcellular location">
    <subcellularLocation>
        <location evidence="1">Nucleus</location>
    </subcellularLocation>
</comment>
<comment type="similarity">
    <text evidence="4">Belongs to the krueppel C2H2-type zinc-finger protein family.</text>
</comment>
<comment type="sequence caution" evidence="4">
    <conflict type="erroneous initiation">
        <sequence resource="EMBL-CDS" id="CAA57406"/>
    </conflict>
</comment>
<reference key="1">
    <citation type="journal article" date="1996" name="DNA Cell Biol.">
        <title>Constitutive amplification of a zinc finger protein gene in cattle.</title>
        <authorList>
            <person name="le Chalony C."/>
            <person name="Apiou F."/>
            <person name="Pibouin L."/>
            <person name="Dutrillaux B."/>
            <person name="Goubin G."/>
        </authorList>
    </citation>
    <scope>NUCLEOTIDE SEQUENCE [GENOMIC DNA]</scope>
    <source>
        <tissue>Lung</tissue>
    </source>
</reference>